<sequence length="371" mass="37264">MPARPTPPAVPLALALAAALAAPAPAAAARVKELADVVGVRENALYGYGLVVGLAGTGDSERVLFTQQSVAGMLGRLGIRIDPKDVRSRNVAAVMVTARLPPFARPGTRIDVAVASMGNARSLAGGLLLVTPLSGGDGKVYAVGQGPVQVAGYDAGAGGAELRKNTPTSGRVAGGATVERAVDFALGQAPLVLALRRPDLTTASRVAAAVNAKLGAGTARAVDPAAVELSPPPARKDDAVGFLAEVELLEVEADQRARVVVSERTGTVVAGDGVRLRPVAVAHGGLQVRVQRDPAVSQPAPFGAGRTVEATRDRAAAAEGAGGVVALPAAASVKDLARALDLLGATPRDLVAVLEAIRAAGALDADLEVLE</sequence>
<organism>
    <name type="scientific">Anaeromyxobacter dehalogenans (strain 2CP-C)</name>
    <dbReference type="NCBI Taxonomy" id="290397"/>
    <lineage>
        <taxon>Bacteria</taxon>
        <taxon>Pseudomonadati</taxon>
        <taxon>Myxococcota</taxon>
        <taxon>Myxococcia</taxon>
        <taxon>Myxococcales</taxon>
        <taxon>Cystobacterineae</taxon>
        <taxon>Anaeromyxobacteraceae</taxon>
        <taxon>Anaeromyxobacter</taxon>
    </lineage>
</organism>
<comment type="function">
    <text evidence="1">Assembles around the rod to form the L-ring and probably protects the motor/basal body from shearing forces during rotation.</text>
</comment>
<comment type="subunit">
    <text evidence="1">The basal body constitutes a major portion of the flagellar organelle and consists of four rings (L,P,S, and M) mounted on a central rod.</text>
</comment>
<comment type="subcellular location">
    <subcellularLocation>
        <location evidence="1">Periplasm</location>
    </subcellularLocation>
    <subcellularLocation>
        <location evidence="1">Bacterial flagellum basal body</location>
    </subcellularLocation>
</comment>
<comment type="similarity">
    <text evidence="1">Belongs to the FlgI family.</text>
</comment>
<name>FLGI_ANADE</name>
<evidence type="ECO:0000255" key="1">
    <source>
        <dbReference type="HAMAP-Rule" id="MF_00416"/>
    </source>
</evidence>
<gene>
    <name evidence="1" type="primary">flgI</name>
    <name type="ordered locus">Adeh_1348</name>
</gene>
<reference key="1">
    <citation type="submission" date="2006-01" db="EMBL/GenBank/DDBJ databases">
        <title>Complete sequence of Anaeromyxobacter dehalogenans 2CP-C.</title>
        <authorList>
            <person name="Copeland A."/>
            <person name="Lucas S."/>
            <person name="Lapidus A."/>
            <person name="Barry K."/>
            <person name="Detter J.C."/>
            <person name="Glavina T."/>
            <person name="Hammon N."/>
            <person name="Israni S."/>
            <person name="Pitluck S."/>
            <person name="Brettin T."/>
            <person name="Bruce D."/>
            <person name="Han C."/>
            <person name="Tapia R."/>
            <person name="Gilna P."/>
            <person name="Kiss H."/>
            <person name="Schmutz J."/>
            <person name="Larimer F."/>
            <person name="Land M."/>
            <person name="Kyrpides N."/>
            <person name="Anderson I."/>
            <person name="Sanford R.A."/>
            <person name="Ritalahti K.M."/>
            <person name="Thomas H.S."/>
            <person name="Kirby J.R."/>
            <person name="Zhulin I.B."/>
            <person name="Loeffler F.E."/>
            <person name="Richardson P."/>
        </authorList>
    </citation>
    <scope>NUCLEOTIDE SEQUENCE [LARGE SCALE GENOMIC DNA]</scope>
    <source>
        <strain>2CP-C</strain>
    </source>
</reference>
<dbReference type="EMBL" id="CP000251">
    <property type="protein sequence ID" value="ABC81122.1"/>
    <property type="molecule type" value="Genomic_DNA"/>
</dbReference>
<dbReference type="RefSeq" id="WP_011420405.1">
    <property type="nucleotide sequence ID" value="NC_007760.1"/>
</dbReference>
<dbReference type="SMR" id="Q2IQP1"/>
<dbReference type="STRING" id="290397.Adeh_1348"/>
<dbReference type="KEGG" id="ade:Adeh_1348"/>
<dbReference type="eggNOG" id="COG1706">
    <property type="taxonomic scope" value="Bacteria"/>
</dbReference>
<dbReference type="HOGENOM" id="CLU_045235_1_0_7"/>
<dbReference type="OrthoDB" id="9786431at2"/>
<dbReference type="Proteomes" id="UP000001935">
    <property type="component" value="Chromosome"/>
</dbReference>
<dbReference type="GO" id="GO:0009428">
    <property type="term" value="C:bacterial-type flagellum basal body, distal rod, P ring"/>
    <property type="evidence" value="ECO:0007669"/>
    <property type="project" value="InterPro"/>
</dbReference>
<dbReference type="GO" id="GO:0030288">
    <property type="term" value="C:outer membrane-bounded periplasmic space"/>
    <property type="evidence" value="ECO:0007669"/>
    <property type="project" value="InterPro"/>
</dbReference>
<dbReference type="GO" id="GO:0005198">
    <property type="term" value="F:structural molecule activity"/>
    <property type="evidence" value="ECO:0007669"/>
    <property type="project" value="InterPro"/>
</dbReference>
<dbReference type="GO" id="GO:0071973">
    <property type="term" value="P:bacterial-type flagellum-dependent cell motility"/>
    <property type="evidence" value="ECO:0007669"/>
    <property type="project" value="InterPro"/>
</dbReference>
<dbReference type="HAMAP" id="MF_00416">
    <property type="entry name" value="FlgI"/>
    <property type="match status" value="1"/>
</dbReference>
<dbReference type="InterPro" id="IPR001782">
    <property type="entry name" value="Flag_FlgI"/>
</dbReference>
<dbReference type="NCBIfam" id="NF003676">
    <property type="entry name" value="PRK05303.1"/>
    <property type="match status" value="1"/>
</dbReference>
<dbReference type="PANTHER" id="PTHR30381">
    <property type="entry name" value="FLAGELLAR P-RING PERIPLASMIC PROTEIN FLGI"/>
    <property type="match status" value="1"/>
</dbReference>
<dbReference type="PANTHER" id="PTHR30381:SF0">
    <property type="entry name" value="FLAGELLAR P-RING PROTEIN"/>
    <property type="match status" value="1"/>
</dbReference>
<dbReference type="Pfam" id="PF02119">
    <property type="entry name" value="FlgI"/>
    <property type="match status" value="1"/>
</dbReference>
<dbReference type="PRINTS" id="PR01010">
    <property type="entry name" value="FLGPRINGFLGI"/>
</dbReference>
<keyword id="KW-0975">Bacterial flagellum</keyword>
<keyword id="KW-0574">Periplasm</keyword>
<keyword id="KW-1185">Reference proteome</keyword>
<keyword id="KW-0732">Signal</keyword>
<proteinExistence type="inferred from homology"/>
<accession>Q2IQP1</accession>
<feature type="signal peptide" evidence="1">
    <location>
        <begin position="1"/>
        <end position="28"/>
    </location>
</feature>
<feature type="chain" id="PRO_0000236295" description="Flagellar P-ring protein">
    <location>
        <begin position="29"/>
        <end position="371"/>
    </location>
</feature>
<protein>
    <recommendedName>
        <fullName evidence="1">Flagellar P-ring protein</fullName>
    </recommendedName>
    <alternativeName>
        <fullName evidence="1">Basal body P-ring protein</fullName>
    </alternativeName>
</protein>